<evidence type="ECO:0000250" key="1"/>
<evidence type="ECO:0000255" key="2">
    <source>
        <dbReference type="PROSITE-ProRule" id="PRU00200"/>
    </source>
</evidence>
<evidence type="ECO:0000305" key="3"/>
<dbReference type="EMBL" id="CP009819">
    <property type="protein sequence ID" value="ATZ57460.1"/>
    <property type="molecule type" value="Genomic_DNA"/>
</dbReference>
<dbReference type="SMR" id="A6SIZ0"/>
<dbReference type="EnsemblFungi" id="Bcin15g00380.1">
    <property type="protein sequence ID" value="Bcin15p00380.1"/>
    <property type="gene ID" value="Bcin15g00380"/>
</dbReference>
<dbReference type="GeneID" id="5429276"/>
<dbReference type="KEGG" id="bfu:BCIN_15g00380"/>
<dbReference type="VEuPathDB" id="FungiDB:Bcin15g00380"/>
<dbReference type="OMA" id="EVFEIDM"/>
<dbReference type="OrthoDB" id="277199at2759"/>
<dbReference type="Proteomes" id="UP000001798">
    <property type="component" value="Chromosome bcin15"/>
</dbReference>
<dbReference type="GO" id="GO:0005737">
    <property type="term" value="C:cytoplasm"/>
    <property type="evidence" value="ECO:0007669"/>
    <property type="project" value="UniProtKB-SubCell"/>
</dbReference>
<dbReference type="GO" id="GO:1990904">
    <property type="term" value="C:ribonucleoprotein complex"/>
    <property type="evidence" value="ECO:0007669"/>
    <property type="project" value="UniProtKB-KW"/>
</dbReference>
<dbReference type="GO" id="GO:0005840">
    <property type="term" value="C:ribosome"/>
    <property type="evidence" value="ECO:0007669"/>
    <property type="project" value="UniProtKB-KW"/>
</dbReference>
<dbReference type="GO" id="GO:0003729">
    <property type="term" value="F:mRNA binding"/>
    <property type="evidence" value="ECO:0007669"/>
    <property type="project" value="TreeGrafter"/>
</dbReference>
<dbReference type="GO" id="GO:0003743">
    <property type="term" value="F:translation initiation factor activity"/>
    <property type="evidence" value="ECO:0007669"/>
    <property type="project" value="InterPro"/>
</dbReference>
<dbReference type="GO" id="GO:0001731">
    <property type="term" value="P:formation of translation preinitiation complex"/>
    <property type="evidence" value="ECO:0007669"/>
    <property type="project" value="TreeGrafter"/>
</dbReference>
<dbReference type="GO" id="GO:0000184">
    <property type="term" value="P:nuclear-transcribed mRNA catabolic process, nonsense-mediated decay"/>
    <property type="evidence" value="ECO:0007669"/>
    <property type="project" value="EnsemblFungi"/>
</dbReference>
<dbReference type="GO" id="GO:0032790">
    <property type="term" value="P:ribosome disassembly"/>
    <property type="evidence" value="ECO:0007669"/>
    <property type="project" value="EnsemblFungi"/>
</dbReference>
<dbReference type="GO" id="GO:0002188">
    <property type="term" value="P:translation reinitiation"/>
    <property type="evidence" value="ECO:0007669"/>
    <property type="project" value="TreeGrafter"/>
</dbReference>
<dbReference type="CDD" id="cd11607">
    <property type="entry name" value="DENR_C"/>
    <property type="match status" value="1"/>
</dbReference>
<dbReference type="FunFam" id="3.30.780.10:FF:000032">
    <property type="entry name" value="Translation machinery-associated protein 22"/>
    <property type="match status" value="1"/>
</dbReference>
<dbReference type="Gene3D" id="3.30.780.10">
    <property type="entry name" value="SUI1-like domain"/>
    <property type="match status" value="1"/>
</dbReference>
<dbReference type="InterPro" id="IPR050318">
    <property type="entry name" value="DENR/SUI1_TIF"/>
</dbReference>
<dbReference type="InterPro" id="IPR046447">
    <property type="entry name" value="DENR_C"/>
</dbReference>
<dbReference type="InterPro" id="IPR005873">
    <property type="entry name" value="DENR_eukaryotes"/>
</dbReference>
<dbReference type="InterPro" id="IPR048517">
    <property type="entry name" value="DENR_N"/>
</dbReference>
<dbReference type="InterPro" id="IPR001950">
    <property type="entry name" value="SUI1"/>
</dbReference>
<dbReference type="InterPro" id="IPR036877">
    <property type="entry name" value="SUI1_dom_sf"/>
</dbReference>
<dbReference type="NCBIfam" id="TIGR01159">
    <property type="entry name" value="DRP1"/>
    <property type="match status" value="1"/>
</dbReference>
<dbReference type="PANTHER" id="PTHR12789:SF0">
    <property type="entry name" value="DENSITY-REGULATED PROTEIN"/>
    <property type="match status" value="1"/>
</dbReference>
<dbReference type="PANTHER" id="PTHR12789">
    <property type="entry name" value="DENSITY-REGULATED PROTEIN HOMOLOG"/>
    <property type="match status" value="1"/>
</dbReference>
<dbReference type="Pfam" id="PF21023">
    <property type="entry name" value="DENR_N"/>
    <property type="match status" value="1"/>
</dbReference>
<dbReference type="Pfam" id="PF01253">
    <property type="entry name" value="SUI1"/>
    <property type="match status" value="1"/>
</dbReference>
<dbReference type="SUPFAM" id="SSF55159">
    <property type="entry name" value="eIF1-like"/>
    <property type="match status" value="1"/>
</dbReference>
<dbReference type="PROSITE" id="PS50296">
    <property type="entry name" value="SUI1"/>
    <property type="match status" value="1"/>
</dbReference>
<feature type="chain" id="PRO_0000320437" description="Translation machinery-associated protein 22">
    <location>
        <begin position="1"/>
        <end position="197"/>
    </location>
</feature>
<feature type="domain" description="SUI1" evidence="2">
    <location>
        <begin position="103"/>
        <end position="174"/>
    </location>
</feature>
<sequence length="197" mass="21893">MADVEESTAPAEIQSRHVVYCGVCSLPPEYCEYGGTVKKCQEWLEKKYPSMYERLWSEDALAAATSTLSVDAQKRAAKDATKKAAKAEALEAKQNETLASSKIRIKRVERNKRKYVTEVQGLEAFGLELKKVAKEFGSRFATGSSVTKVASGGQEITVQGDVSDDVREFLIKNYKNIPKKNIVLEEPKKKKAEPVEV</sequence>
<gene>
    <name type="primary">tma22</name>
    <name type="ORF">BC1G_12410</name>
    <name type="ORF">BCIN_15g00380</name>
</gene>
<reference key="1">
    <citation type="journal article" date="2011" name="PLoS Genet.">
        <title>Genomic analysis of the necrotrophic fungal pathogens Sclerotinia sclerotiorum and Botrytis cinerea.</title>
        <authorList>
            <person name="Amselem J."/>
            <person name="Cuomo C.A."/>
            <person name="van Kan J.A.L."/>
            <person name="Viaud M."/>
            <person name="Benito E.P."/>
            <person name="Couloux A."/>
            <person name="Coutinho P.M."/>
            <person name="de Vries R.P."/>
            <person name="Dyer P.S."/>
            <person name="Fillinger S."/>
            <person name="Fournier E."/>
            <person name="Gout L."/>
            <person name="Hahn M."/>
            <person name="Kohn L."/>
            <person name="Lapalu N."/>
            <person name="Plummer K.M."/>
            <person name="Pradier J.-M."/>
            <person name="Quevillon E."/>
            <person name="Sharon A."/>
            <person name="Simon A."/>
            <person name="ten Have A."/>
            <person name="Tudzynski B."/>
            <person name="Tudzynski P."/>
            <person name="Wincker P."/>
            <person name="Andrew M."/>
            <person name="Anthouard V."/>
            <person name="Beever R.E."/>
            <person name="Beffa R."/>
            <person name="Benoit I."/>
            <person name="Bouzid O."/>
            <person name="Brault B."/>
            <person name="Chen Z."/>
            <person name="Choquer M."/>
            <person name="Collemare J."/>
            <person name="Cotton P."/>
            <person name="Danchin E.G."/>
            <person name="Da Silva C."/>
            <person name="Gautier A."/>
            <person name="Giraud C."/>
            <person name="Giraud T."/>
            <person name="Gonzalez C."/>
            <person name="Grossetete S."/>
            <person name="Gueldener U."/>
            <person name="Henrissat B."/>
            <person name="Howlett B.J."/>
            <person name="Kodira C."/>
            <person name="Kretschmer M."/>
            <person name="Lappartient A."/>
            <person name="Leroch M."/>
            <person name="Levis C."/>
            <person name="Mauceli E."/>
            <person name="Neuveglise C."/>
            <person name="Oeser B."/>
            <person name="Pearson M."/>
            <person name="Poulain J."/>
            <person name="Poussereau N."/>
            <person name="Quesneville H."/>
            <person name="Rascle C."/>
            <person name="Schumacher J."/>
            <person name="Segurens B."/>
            <person name="Sexton A."/>
            <person name="Silva E."/>
            <person name="Sirven C."/>
            <person name="Soanes D.M."/>
            <person name="Talbot N.J."/>
            <person name="Templeton M."/>
            <person name="Yandava C."/>
            <person name="Yarden O."/>
            <person name="Zeng Q."/>
            <person name="Rollins J.A."/>
            <person name="Lebrun M.-H."/>
            <person name="Dickman M."/>
        </authorList>
    </citation>
    <scope>NUCLEOTIDE SEQUENCE [LARGE SCALE GENOMIC DNA]</scope>
    <source>
        <strain>B05.10</strain>
    </source>
</reference>
<reference key="2">
    <citation type="journal article" date="2012" name="Eukaryot. Cell">
        <title>Genome update of Botrytis cinerea strains B05.10 and T4.</title>
        <authorList>
            <person name="Staats M."/>
            <person name="van Kan J.A.L."/>
        </authorList>
    </citation>
    <scope>NUCLEOTIDE SEQUENCE [LARGE SCALE GENOMIC DNA]</scope>
    <scope>GENOME REANNOTATION</scope>
    <source>
        <strain>B05.10</strain>
    </source>
</reference>
<reference key="3">
    <citation type="journal article" date="2017" name="Mol. Plant Pathol.">
        <title>A gapless genome sequence of the fungus Botrytis cinerea.</title>
        <authorList>
            <person name="van Kan J.A.L."/>
            <person name="Stassen J.H.M."/>
            <person name="Mosbach A."/>
            <person name="van der Lee T.A.J."/>
            <person name="Faino L."/>
            <person name="Farmer A.D."/>
            <person name="Papasotiriou D.G."/>
            <person name="Zhou S."/>
            <person name="Seidl M.F."/>
            <person name="Cottam E."/>
            <person name="Edel D."/>
            <person name="Hahn M."/>
            <person name="Schwartz D.C."/>
            <person name="Dietrich R.A."/>
            <person name="Widdison S."/>
            <person name="Scalliet G."/>
        </authorList>
    </citation>
    <scope>NUCLEOTIDE SEQUENCE [LARGE SCALE GENOMIC DNA]</scope>
    <scope>GENOME REANNOTATION</scope>
    <source>
        <strain>B05.10</strain>
    </source>
</reference>
<protein>
    <recommendedName>
        <fullName>Translation machinery-associated protein 22</fullName>
    </recommendedName>
</protein>
<accession>A6SIZ0</accession>
<accession>A0A384K3Q6</accession>
<comment type="subunit">
    <text evidence="1">Interacts with the 40S ribosomal subunit.</text>
</comment>
<comment type="subcellular location">
    <subcellularLocation>
        <location evidence="1">Cytoplasm</location>
    </subcellularLocation>
</comment>
<comment type="domain">
    <text>The SUI1 domain may be involved in RNA binding.</text>
</comment>
<comment type="similarity">
    <text evidence="3">Belongs to the DENR family.</text>
</comment>
<keyword id="KW-0963">Cytoplasm</keyword>
<keyword id="KW-1185">Reference proteome</keyword>
<keyword id="KW-0687">Ribonucleoprotein</keyword>
<keyword id="KW-0689">Ribosomal protein</keyword>
<name>DENR_BOTFB</name>
<proteinExistence type="inferred from homology"/>
<organism>
    <name type="scientific">Botryotinia fuckeliana (strain B05.10)</name>
    <name type="common">Noble rot fungus</name>
    <name type="synonym">Botrytis cinerea</name>
    <dbReference type="NCBI Taxonomy" id="332648"/>
    <lineage>
        <taxon>Eukaryota</taxon>
        <taxon>Fungi</taxon>
        <taxon>Dikarya</taxon>
        <taxon>Ascomycota</taxon>
        <taxon>Pezizomycotina</taxon>
        <taxon>Leotiomycetes</taxon>
        <taxon>Helotiales</taxon>
        <taxon>Sclerotiniaceae</taxon>
        <taxon>Botrytis</taxon>
    </lineage>
</organism>